<gene>
    <name evidence="8" type="primary">ASZ1</name>
    <name type="synonym">ALP1</name>
    <name type="synonym">ANKL1</name>
    <name type="synonym">C7orf7</name>
    <name evidence="7" type="synonym">GASZ</name>
</gene>
<evidence type="ECO:0000250" key="1"/>
<evidence type="ECO:0000250" key="2">
    <source>
        <dbReference type="UniProtKB" id="Q8VD46"/>
    </source>
</evidence>
<evidence type="ECO:0000256" key="3">
    <source>
        <dbReference type="SAM" id="MobiDB-lite"/>
    </source>
</evidence>
<evidence type="ECO:0000269" key="4">
    <source>
    </source>
</evidence>
<evidence type="ECO:0000303" key="5">
    <source>
    </source>
</evidence>
<evidence type="ECO:0000305" key="6"/>
<evidence type="ECO:0000312" key="7">
    <source>
        <dbReference type="EMBL" id="AAL68815.1"/>
    </source>
</evidence>
<evidence type="ECO:0000312" key="8">
    <source>
        <dbReference type="HGNC" id="HGNC:1350"/>
    </source>
</evidence>
<organism>
    <name type="scientific">Homo sapiens</name>
    <name type="common">Human</name>
    <dbReference type="NCBI Taxonomy" id="9606"/>
    <lineage>
        <taxon>Eukaryota</taxon>
        <taxon>Metazoa</taxon>
        <taxon>Chordata</taxon>
        <taxon>Craniata</taxon>
        <taxon>Vertebrata</taxon>
        <taxon>Euteleostomi</taxon>
        <taxon>Mammalia</taxon>
        <taxon>Eutheria</taxon>
        <taxon>Euarchontoglires</taxon>
        <taxon>Primates</taxon>
        <taxon>Haplorrhini</taxon>
        <taxon>Catarrhini</taxon>
        <taxon>Hominidae</taxon>
        <taxon>Homo</taxon>
    </lineage>
</organism>
<comment type="function">
    <text evidence="1">Plays a central role during spermatogenesis by repressing transposable elements and preventing their mobilization, which is essential for the germline integrity. Acts via the piRNA metabolic process, which mediates the repression of transposable elements during meiosis by forming complexes composed of piRNAs and Piwi proteins and governs the methylation and subsequent repression of transposons. Its association with pi-bodies suggests a participation in the primary piRNAs metabolic process. Required prior to the pachytene stage to facilitate the production of multiple types of piRNAs, including those associated with repeats involved in the regulation of retrotransposons. May act by mediating protein-protein interactions during germ cell maturation (By similarity).</text>
</comment>
<comment type="subunit">
    <text evidence="1">Interacts with DDX4, PIWIL1, RANBP9 and TDRD1.</text>
</comment>
<comment type="interaction">
    <interactant intactId="EBI-12239061">
        <id>Q8WWH4</id>
    </interactant>
    <interactant intactId="EBI-749204">
        <id>O15155</id>
        <label>BET1</label>
    </interactant>
    <organismsDiffer>false</organismsDiffer>
    <experiments>3</experiments>
</comment>
<comment type="interaction">
    <interactant intactId="EBI-12239061">
        <id>Q8WWH4</id>
    </interactant>
    <interactant intactId="EBI-10305240">
        <id>Q9H1M4</id>
        <label>DEFB127</label>
    </interactant>
    <organismsDiffer>false</organismsDiffer>
    <experiments>3</experiments>
</comment>
<comment type="interaction">
    <interactant intactId="EBI-12239061">
        <id>Q8WWH4</id>
    </interactant>
    <interactant intactId="EBI-12033434">
        <id>Q9UBY5</id>
        <label>LPAR3</label>
    </interactant>
    <organismsDiffer>false</organismsDiffer>
    <experiments>3</experiments>
</comment>
<comment type="interaction">
    <interactant intactId="EBI-12239061">
        <id>Q8WWH4</id>
    </interactant>
    <interactant intactId="EBI-12051377">
        <id>Q8N912</id>
        <label>NRAC</label>
    </interactant>
    <organismsDiffer>false</organismsDiffer>
    <experiments>3</experiments>
</comment>
<comment type="interaction">
    <interactant intactId="EBI-12239061">
        <id>Q8WWH4</id>
    </interactant>
    <interactant intactId="EBI-12870360">
        <id>P78382</id>
        <label>SLC35A1</label>
    </interactant>
    <organismsDiffer>false</organismsDiffer>
    <experiments>3</experiments>
</comment>
<comment type="interaction">
    <interactant intactId="EBI-12239061">
        <id>Q8WWH4</id>
    </interactant>
    <interactant intactId="EBI-12188413">
        <id>B2RUZ4</id>
        <label>SMIM1</label>
    </interactant>
    <organismsDiffer>false</organismsDiffer>
    <experiments>3</experiments>
</comment>
<comment type="interaction">
    <interactant intactId="EBI-12239061">
        <id>Q8WWH4</id>
    </interactant>
    <interactant intactId="EBI-10173151">
        <id>A2RU14</id>
        <label>TMEM218</label>
    </interactant>
    <organismsDiffer>false</organismsDiffer>
    <experiments>3</experiments>
</comment>
<comment type="interaction">
    <interactant intactId="EBI-12239061">
        <id>Q8WWH4</id>
    </interactant>
    <interactant intactId="EBI-12111910">
        <id>Q5BJF2</id>
        <label>TMEM97</label>
    </interactant>
    <organismsDiffer>false</organismsDiffer>
    <experiments>3</experiments>
</comment>
<comment type="interaction">
    <interactant intactId="EBI-12239061">
        <id>Q8WWH4</id>
    </interactant>
    <interactant intactId="EBI-717441">
        <id>O14798</id>
        <label>TNFRSF10C</label>
    </interactant>
    <organismsDiffer>false</organismsDiffer>
    <experiments>3</experiments>
</comment>
<comment type="interaction">
    <interactant intactId="EBI-12239061">
        <id>Q8WWH4</id>
    </interactant>
    <interactant intactId="EBI-12195249">
        <id>Q5TGU0</id>
        <label>TSPO2</label>
    </interactant>
    <organismsDiffer>false</organismsDiffer>
    <experiments>3</experiments>
</comment>
<comment type="interaction">
    <interactant intactId="EBI-12239061">
        <id>Q8WWH4</id>
    </interactant>
    <interactant intactId="EBI-25492395">
        <id>PRO_0000449633</id>
        <label>rep</label>
        <dbReference type="UniProtKB" id="P0DTD1"/>
    </interactant>
    <organismsDiffer>true</organismsDiffer>
    <experiments>4</experiments>
</comment>
<comment type="subcellular location">
    <subcellularLocation>
        <location evidence="1">Cytoplasm</location>
    </subcellularLocation>
    <text evidence="1">Component of the meiotic nuage, also named P granule, a germ-cell-specific organelle required to repress transposon activity during meiosis. Specifically localizes to pi-bodies, a subset of the nuage which contains primary piRNAs (By similarity).</text>
</comment>
<comment type="alternative products">
    <event type="alternative splicing"/>
    <isoform>
        <id>Q8WWH4-1</id>
        <name>1</name>
        <sequence type="displayed"/>
    </isoform>
    <isoform>
        <id>Q8WWH4-2</id>
        <name>2</name>
        <sequence type="described" ref="VSP_056918"/>
    </isoform>
</comment>
<comment type="tissue specificity">
    <text evidence="4">Expressed exclusively in the testis and ovary and at higher levels in the adult testis compared with the adult ovary.</text>
</comment>
<sequence length="475" mass="53458">MAASALRGLPVAGGGESSESEDDGWEIGYLDRTSQKLKRLLPIEEKKEKFKKAMTIGDVSLVQELLDSGISVDSNFQYGWTPLMYAASVANAELVRVLLDRGANASFEKDKQSILITACSAHGSEEQILKCVELLLSRNADPNVACRRLMTPIMYAARDGHTQVVALLVAHGAEVNTQDENGYTALTWAARQGHKNIVLKLLELGANKMLQTKDGKMPSEIAKRNKHHEIFNLLSFTLNPLEGKLQQLTKEDTICKILTTDSDREKDHIFSSYTAFGDLEVFLHGLGLEHMTDLLKERDITLRHLLTMREDEFTKNGITSKDQQKILAALKELQVEEIQFGELSEETKLEISGDEFLNFLLKLNKQCGHLITAVQNVITELPVNSQKITLEWASPQNFTSVCEELVNNVEDLSEKVCKLKDLIQKLQNERENDPTHIQLREEVSTWNSRILKRTAITICGFGFLLFICKLTFQRK</sequence>
<reference evidence="6" key="1">
    <citation type="journal article" date="2002" name="Mol. Endocrinol.">
        <title>Identification of Gasz, an evolutionarily conserved gene expressed exclusively in germ cells and encoding a protein with four ankyrin repeats, a sterile-alpha motif, and a basic leucine zipper.</title>
        <authorList>
            <person name="Yan W."/>
            <person name="Rajkovic A."/>
            <person name="Viveiros M.M."/>
            <person name="Burns K.H."/>
            <person name="Eppig J.J."/>
            <person name="Matzuk M.M."/>
        </authorList>
    </citation>
    <scope>NUCLEOTIDE SEQUENCE [MRNA] (ISOFORM 1)</scope>
    <scope>TISSUE SPECIFICITY</scope>
    <source>
        <tissue evidence="4">Ovary</tissue>
        <tissue evidence="4">Testis</tissue>
    </source>
</reference>
<reference key="2">
    <citation type="journal article" date="2004" name="Nat. Genet.">
        <title>Complete sequencing and characterization of 21,243 full-length human cDNAs.</title>
        <authorList>
            <person name="Ota T."/>
            <person name="Suzuki Y."/>
            <person name="Nishikawa T."/>
            <person name="Otsuki T."/>
            <person name="Sugiyama T."/>
            <person name="Irie R."/>
            <person name="Wakamatsu A."/>
            <person name="Hayashi K."/>
            <person name="Sato H."/>
            <person name="Nagai K."/>
            <person name="Kimura K."/>
            <person name="Makita H."/>
            <person name="Sekine M."/>
            <person name="Obayashi M."/>
            <person name="Nishi T."/>
            <person name="Shibahara T."/>
            <person name="Tanaka T."/>
            <person name="Ishii S."/>
            <person name="Yamamoto J."/>
            <person name="Saito K."/>
            <person name="Kawai Y."/>
            <person name="Isono Y."/>
            <person name="Nakamura Y."/>
            <person name="Nagahari K."/>
            <person name="Murakami K."/>
            <person name="Yasuda T."/>
            <person name="Iwayanagi T."/>
            <person name="Wagatsuma M."/>
            <person name="Shiratori A."/>
            <person name="Sudo H."/>
            <person name="Hosoiri T."/>
            <person name="Kaku Y."/>
            <person name="Kodaira H."/>
            <person name="Kondo H."/>
            <person name="Sugawara M."/>
            <person name="Takahashi M."/>
            <person name="Kanda K."/>
            <person name="Yokoi T."/>
            <person name="Furuya T."/>
            <person name="Kikkawa E."/>
            <person name="Omura Y."/>
            <person name="Abe K."/>
            <person name="Kamihara K."/>
            <person name="Katsuta N."/>
            <person name="Sato K."/>
            <person name="Tanikawa M."/>
            <person name="Yamazaki M."/>
            <person name="Ninomiya K."/>
            <person name="Ishibashi T."/>
            <person name="Yamashita H."/>
            <person name="Murakawa K."/>
            <person name="Fujimori K."/>
            <person name="Tanai H."/>
            <person name="Kimata M."/>
            <person name="Watanabe M."/>
            <person name="Hiraoka S."/>
            <person name="Chiba Y."/>
            <person name="Ishida S."/>
            <person name="Ono Y."/>
            <person name="Takiguchi S."/>
            <person name="Watanabe S."/>
            <person name="Yosida M."/>
            <person name="Hotuta T."/>
            <person name="Kusano J."/>
            <person name="Kanehori K."/>
            <person name="Takahashi-Fujii A."/>
            <person name="Hara H."/>
            <person name="Tanase T.-O."/>
            <person name="Nomura Y."/>
            <person name="Togiya S."/>
            <person name="Komai F."/>
            <person name="Hara R."/>
            <person name="Takeuchi K."/>
            <person name="Arita M."/>
            <person name="Imose N."/>
            <person name="Musashino K."/>
            <person name="Yuuki H."/>
            <person name="Oshima A."/>
            <person name="Sasaki N."/>
            <person name="Aotsuka S."/>
            <person name="Yoshikawa Y."/>
            <person name="Matsunawa H."/>
            <person name="Ichihara T."/>
            <person name="Shiohata N."/>
            <person name="Sano S."/>
            <person name="Moriya S."/>
            <person name="Momiyama H."/>
            <person name="Satoh N."/>
            <person name="Takami S."/>
            <person name="Terashima Y."/>
            <person name="Suzuki O."/>
            <person name="Nakagawa S."/>
            <person name="Senoh A."/>
            <person name="Mizoguchi H."/>
            <person name="Goto Y."/>
            <person name="Shimizu F."/>
            <person name="Wakebe H."/>
            <person name="Hishigaki H."/>
            <person name="Watanabe T."/>
            <person name="Sugiyama A."/>
            <person name="Takemoto M."/>
            <person name="Kawakami B."/>
            <person name="Yamazaki M."/>
            <person name="Watanabe K."/>
            <person name="Kumagai A."/>
            <person name="Itakura S."/>
            <person name="Fukuzumi Y."/>
            <person name="Fujimori Y."/>
            <person name="Komiyama M."/>
            <person name="Tashiro H."/>
            <person name="Tanigami A."/>
            <person name="Fujiwara T."/>
            <person name="Ono T."/>
            <person name="Yamada K."/>
            <person name="Fujii Y."/>
            <person name="Ozaki K."/>
            <person name="Hirao M."/>
            <person name="Ohmori Y."/>
            <person name="Kawabata A."/>
            <person name="Hikiji T."/>
            <person name="Kobatake N."/>
            <person name="Inagaki H."/>
            <person name="Ikema Y."/>
            <person name="Okamoto S."/>
            <person name="Okitani R."/>
            <person name="Kawakami T."/>
            <person name="Noguchi S."/>
            <person name="Itoh T."/>
            <person name="Shigeta K."/>
            <person name="Senba T."/>
            <person name="Matsumura K."/>
            <person name="Nakajima Y."/>
            <person name="Mizuno T."/>
            <person name="Morinaga M."/>
            <person name="Sasaki M."/>
            <person name="Togashi T."/>
            <person name="Oyama M."/>
            <person name="Hata H."/>
            <person name="Watanabe M."/>
            <person name="Komatsu T."/>
            <person name="Mizushima-Sugano J."/>
            <person name="Satoh T."/>
            <person name="Shirai Y."/>
            <person name="Takahashi Y."/>
            <person name="Nakagawa K."/>
            <person name="Okumura K."/>
            <person name="Nagase T."/>
            <person name="Nomura N."/>
            <person name="Kikuchi H."/>
            <person name="Masuho Y."/>
            <person name="Yamashita R."/>
            <person name="Nakai K."/>
            <person name="Yada T."/>
            <person name="Nakamura Y."/>
            <person name="Ohara O."/>
            <person name="Isogai T."/>
            <person name="Sugano S."/>
        </authorList>
    </citation>
    <scope>NUCLEOTIDE SEQUENCE [LARGE SCALE MRNA] (ISOFORM 1)</scope>
    <source>
        <tissue>Testis</tissue>
    </source>
</reference>
<reference key="3">
    <citation type="journal article" date="2003" name="Science">
        <title>Human chromosome 7: DNA sequence and biology.</title>
        <authorList>
            <person name="Scherer S.W."/>
            <person name="Cheung J."/>
            <person name="MacDonald J.R."/>
            <person name="Osborne L.R."/>
            <person name="Nakabayashi K."/>
            <person name="Herbrick J.-A."/>
            <person name="Carson A.R."/>
            <person name="Parker-Katiraee L."/>
            <person name="Skaug J."/>
            <person name="Khaja R."/>
            <person name="Zhang J."/>
            <person name="Hudek A.K."/>
            <person name="Li M."/>
            <person name="Haddad M."/>
            <person name="Duggan G.E."/>
            <person name="Fernandez B.A."/>
            <person name="Kanematsu E."/>
            <person name="Gentles S."/>
            <person name="Christopoulos C.C."/>
            <person name="Choufani S."/>
            <person name="Kwasnicka D."/>
            <person name="Zheng X.H."/>
            <person name="Lai Z."/>
            <person name="Nusskern D.R."/>
            <person name="Zhang Q."/>
            <person name="Gu Z."/>
            <person name="Lu F."/>
            <person name="Zeesman S."/>
            <person name="Nowaczyk M.J."/>
            <person name="Teshima I."/>
            <person name="Chitayat D."/>
            <person name="Shuman C."/>
            <person name="Weksberg R."/>
            <person name="Zackai E.H."/>
            <person name="Grebe T.A."/>
            <person name="Cox S.R."/>
            <person name="Kirkpatrick S.J."/>
            <person name="Rahman N."/>
            <person name="Friedman J.M."/>
            <person name="Heng H.H.Q."/>
            <person name="Pelicci P.G."/>
            <person name="Lo-Coco F."/>
            <person name="Belloni E."/>
            <person name="Shaffer L.G."/>
            <person name="Pober B."/>
            <person name="Morton C.C."/>
            <person name="Gusella J.F."/>
            <person name="Bruns G.A.P."/>
            <person name="Korf B.R."/>
            <person name="Quade B.J."/>
            <person name="Ligon A.H."/>
            <person name="Ferguson H."/>
            <person name="Higgins A.W."/>
            <person name="Leach N.T."/>
            <person name="Herrick S.R."/>
            <person name="Lemyre E."/>
            <person name="Farra C.G."/>
            <person name="Kim H.-G."/>
            <person name="Summers A.M."/>
            <person name="Gripp K.W."/>
            <person name="Roberts W."/>
            <person name="Szatmari P."/>
            <person name="Winsor E.J.T."/>
            <person name="Grzeschik K.-H."/>
            <person name="Teebi A."/>
            <person name="Minassian B.A."/>
            <person name="Kere J."/>
            <person name="Armengol L."/>
            <person name="Pujana M.A."/>
            <person name="Estivill X."/>
            <person name="Wilson M.D."/>
            <person name="Koop B.F."/>
            <person name="Tosi S."/>
            <person name="Moore G.E."/>
            <person name="Boright A.P."/>
            <person name="Zlotorynski E."/>
            <person name="Kerem B."/>
            <person name="Kroisel P.M."/>
            <person name="Petek E."/>
            <person name="Oscier D.G."/>
            <person name="Mould S.J."/>
            <person name="Doehner H."/>
            <person name="Doehner K."/>
            <person name="Rommens J.M."/>
            <person name="Vincent J.B."/>
            <person name="Venter J.C."/>
            <person name="Li P.W."/>
            <person name="Mural R.J."/>
            <person name="Adams M.D."/>
            <person name="Tsui L.-C."/>
        </authorList>
    </citation>
    <scope>NUCLEOTIDE SEQUENCE [LARGE SCALE GENOMIC DNA]</scope>
</reference>
<reference key="4">
    <citation type="journal article" date="2004" name="Genome Res.">
        <title>The status, quality, and expansion of the NIH full-length cDNA project: the Mammalian Gene Collection (MGC).</title>
        <authorList>
            <consortium name="The MGC Project Team"/>
        </authorList>
    </citation>
    <scope>NUCLEOTIDE SEQUENCE [LARGE SCALE MRNA] (ISOFORMS 1 AND 2)</scope>
</reference>
<feature type="chain" id="PRO_0000066969" description="Ankyrin repeat, SAM and basic leucine zipper domain-containing protein 1">
    <location>
        <begin position="1"/>
        <end position="475"/>
    </location>
</feature>
<feature type="repeat" description="ANK 1" evidence="6">
    <location>
        <begin position="45"/>
        <end position="74"/>
    </location>
</feature>
<feature type="repeat" description="ANK 2" evidence="6">
    <location>
        <begin position="78"/>
        <end position="107"/>
    </location>
</feature>
<feature type="repeat" description="ANK 3" evidence="6">
    <location>
        <begin position="110"/>
        <end position="144"/>
    </location>
</feature>
<feature type="repeat" description="ANK 4" evidence="6">
    <location>
        <begin position="148"/>
        <end position="177"/>
    </location>
</feature>
<feature type="repeat" description="ANK 5" evidence="6">
    <location>
        <begin position="181"/>
        <end position="210"/>
    </location>
</feature>
<feature type="repeat" description="ANK 6" evidence="6">
    <location>
        <begin position="214"/>
        <end position="243"/>
    </location>
</feature>
<feature type="domain" description="SAM" evidence="6">
    <location>
        <begin position="272"/>
        <end position="334"/>
    </location>
</feature>
<feature type="region of interest" description="Disordered" evidence="3">
    <location>
        <begin position="1"/>
        <end position="25"/>
    </location>
</feature>
<feature type="modified residue" description="Phosphoserine" evidence="2">
    <location>
        <position position="17"/>
    </location>
</feature>
<feature type="modified residue" description="Phosphoserine" evidence="2">
    <location>
        <position position="18"/>
    </location>
</feature>
<feature type="modified residue" description="Phosphoserine" evidence="2">
    <location>
        <position position="20"/>
    </location>
</feature>
<feature type="splice variant" id="VSP_056918" description="In isoform 2." evidence="5">
    <location>
        <begin position="388"/>
        <end position="396"/>
    </location>
</feature>
<feature type="sequence variant" id="VAR_024175" description="In dbSNP:rs1029396.">
    <original>K</original>
    <variation>T</variation>
    <location>
        <position position="216"/>
    </location>
</feature>
<dbReference type="EMBL" id="AF461259">
    <property type="protein sequence ID" value="AAL68815.1"/>
    <property type="molecule type" value="mRNA"/>
</dbReference>
<dbReference type="EMBL" id="AK093445">
    <property type="protein sequence ID" value="BAC04167.1"/>
    <property type="molecule type" value="mRNA"/>
</dbReference>
<dbReference type="EMBL" id="CH236947">
    <property type="protein sequence ID" value="EAL24354.1"/>
    <property type="molecule type" value="Genomic_DNA"/>
</dbReference>
<dbReference type="EMBL" id="BC126186">
    <property type="protein sequence ID" value="AAI26187.1"/>
    <property type="molecule type" value="mRNA"/>
</dbReference>
<dbReference type="EMBL" id="BC126188">
    <property type="protein sequence ID" value="AAI26189.1"/>
    <property type="molecule type" value="mRNA"/>
</dbReference>
<dbReference type="EMBL" id="BC144212">
    <property type="protein sequence ID" value="AAI44213.1"/>
    <property type="molecule type" value="mRNA"/>
</dbReference>
<dbReference type="CCDS" id="CCDS5772.1">
    <molecule id="Q8WWH4-1"/>
</dbReference>
<dbReference type="RefSeq" id="NP_001288750.1">
    <molecule id="Q8WWH4-2"/>
    <property type="nucleotide sequence ID" value="NM_001301821.2"/>
</dbReference>
<dbReference type="RefSeq" id="NP_001288751.1">
    <property type="nucleotide sequence ID" value="NM_001301822.1"/>
</dbReference>
<dbReference type="RefSeq" id="NP_570124.1">
    <molecule id="Q8WWH4-1"/>
    <property type="nucleotide sequence ID" value="NM_130768.3"/>
</dbReference>
<dbReference type="SMR" id="Q8WWH4"/>
<dbReference type="BioGRID" id="126466">
    <property type="interactions" value="12"/>
</dbReference>
<dbReference type="FunCoup" id="Q8WWH4">
    <property type="interactions" value="25"/>
</dbReference>
<dbReference type="IntAct" id="Q8WWH4">
    <property type="interactions" value="11"/>
</dbReference>
<dbReference type="STRING" id="9606.ENSP00000284629"/>
<dbReference type="iPTMnet" id="Q8WWH4"/>
<dbReference type="PhosphoSitePlus" id="Q8WWH4"/>
<dbReference type="BioMuta" id="ASZ1"/>
<dbReference type="DMDM" id="34921898"/>
<dbReference type="MassIVE" id="Q8WWH4"/>
<dbReference type="PaxDb" id="9606-ENSP00000284629"/>
<dbReference type="PeptideAtlas" id="Q8WWH4"/>
<dbReference type="ProteomicsDB" id="74886">
    <molecule id="Q8WWH4-1"/>
</dbReference>
<dbReference type="Antibodypedia" id="17481">
    <property type="antibodies" value="146 antibodies from 24 providers"/>
</dbReference>
<dbReference type="DNASU" id="136991"/>
<dbReference type="Ensembl" id="ENST00000284629.7">
    <molecule id="Q8WWH4-1"/>
    <property type="protein sequence ID" value="ENSP00000284629.2"/>
    <property type="gene ID" value="ENSG00000154438.8"/>
</dbReference>
<dbReference type="GeneID" id="136991"/>
<dbReference type="KEGG" id="hsa:136991"/>
<dbReference type="MANE-Select" id="ENST00000284629.7">
    <property type="protein sequence ID" value="ENSP00000284629.2"/>
    <property type="RefSeq nucleotide sequence ID" value="NM_130768.3"/>
    <property type="RefSeq protein sequence ID" value="NP_570124.1"/>
</dbReference>
<dbReference type="UCSC" id="uc003vjb.2">
    <molecule id="Q8WWH4-1"/>
    <property type="organism name" value="human"/>
</dbReference>
<dbReference type="AGR" id="HGNC:1350"/>
<dbReference type="CTD" id="136991"/>
<dbReference type="DisGeNET" id="136991"/>
<dbReference type="GeneCards" id="ASZ1"/>
<dbReference type="HGNC" id="HGNC:1350">
    <property type="gene designation" value="ASZ1"/>
</dbReference>
<dbReference type="HPA" id="ENSG00000154438">
    <property type="expression patterns" value="Tissue enriched (testis)"/>
</dbReference>
<dbReference type="MIM" id="605797">
    <property type="type" value="gene"/>
</dbReference>
<dbReference type="neXtProt" id="NX_Q8WWH4"/>
<dbReference type="OpenTargets" id="ENSG00000154438"/>
<dbReference type="PharmGKB" id="PA25950"/>
<dbReference type="VEuPathDB" id="HostDB:ENSG00000154438"/>
<dbReference type="eggNOG" id="KOG0504">
    <property type="taxonomic scope" value="Eukaryota"/>
</dbReference>
<dbReference type="GeneTree" id="ENSGT00880000138051"/>
<dbReference type="HOGENOM" id="CLU_053259_0_0_1"/>
<dbReference type="InParanoid" id="Q8WWH4"/>
<dbReference type="OMA" id="PFMFACR"/>
<dbReference type="OrthoDB" id="439236at2759"/>
<dbReference type="PAN-GO" id="Q8WWH4">
    <property type="GO annotations" value="2 GO annotations based on evolutionary models"/>
</dbReference>
<dbReference type="PhylomeDB" id="Q8WWH4"/>
<dbReference type="TreeFam" id="TF352216"/>
<dbReference type="PathwayCommons" id="Q8WWH4"/>
<dbReference type="Reactome" id="R-HSA-5601884">
    <property type="pathway name" value="PIWI-interacting RNA (piRNA) biogenesis"/>
</dbReference>
<dbReference type="SignaLink" id="Q8WWH4"/>
<dbReference type="BioGRID-ORCS" id="136991">
    <property type="hits" value="8 hits in 1144 CRISPR screens"/>
</dbReference>
<dbReference type="ChiTaRS" id="ASZ1">
    <property type="organism name" value="human"/>
</dbReference>
<dbReference type="GeneWiki" id="ASZ1"/>
<dbReference type="GenomeRNAi" id="136991"/>
<dbReference type="Pharos" id="Q8WWH4">
    <property type="development level" value="Tbio"/>
</dbReference>
<dbReference type="PRO" id="PR:Q8WWH4"/>
<dbReference type="Proteomes" id="UP000005640">
    <property type="component" value="Chromosome 7"/>
</dbReference>
<dbReference type="RNAct" id="Q8WWH4">
    <property type="molecule type" value="protein"/>
</dbReference>
<dbReference type="Bgee" id="ENSG00000154438">
    <property type="expression patterns" value="Expressed in male germ line stem cell (sensu Vertebrata) in testis and 67 other cell types or tissues"/>
</dbReference>
<dbReference type="ExpressionAtlas" id="Q8WWH4">
    <property type="expression patterns" value="baseline and differential"/>
</dbReference>
<dbReference type="GO" id="GO:0005737">
    <property type="term" value="C:cytoplasm"/>
    <property type="evidence" value="ECO:0000250"/>
    <property type="project" value="UniProtKB"/>
</dbReference>
<dbReference type="GO" id="GO:0071546">
    <property type="term" value="C:pi-body"/>
    <property type="evidence" value="ECO:0000250"/>
    <property type="project" value="UniProtKB"/>
</dbReference>
<dbReference type="GO" id="GO:0030154">
    <property type="term" value="P:cell differentiation"/>
    <property type="evidence" value="ECO:0007669"/>
    <property type="project" value="UniProtKB-KW"/>
</dbReference>
<dbReference type="GO" id="GO:0007140">
    <property type="term" value="P:male meiotic nuclear division"/>
    <property type="evidence" value="ECO:0000250"/>
    <property type="project" value="UniProtKB"/>
</dbReference>
<dbReference type="GO" id="GO:0031047">
    <property type="term" value="P:regulatory ncRNA-mediated gene silencing"/>
    <property type="evidence" value="ECO:0007669"/>
    <property type="project" value="UniProtKB-KW"/>
</dbReference>
<dbReference type="GO" id="GO:0007283">
    <property type="term" value="P:spermatogenesis"/>
    <property type="evidence" value="ECO:0000250"/>
    <property type="project" value="UniProtKB"/>
</dbReference>
<dbReference type="GO" id="GO:0010526">
    <property type="term" value="P:transposable element silencing"/>
    <property type="evidence" value="ECO:0000250"/>
    <property type="project" value="UniProtKB"/>
</dbReference>
<dbReference type="CDD" id="cd09521">
    <property type="entry name" value="SAM_ASZ1"/>
    <property type="match status" value="1"/>
</dbReference>
<dbReference type="FunFam" id="1.25.40.20:FF:000192">
    <property type="entry name" value="Ankyrin repeat, SAM and basic leucine zipper domain-containing 1"/>
    <property type="match status" value="1"/>
</dbReference>
<dbReference type="FunFam" id="1.10.150.50:FF:000060">
    <property type="entry name" value="Ankyrin repeat, SAM and basic leucine zipper domain-containing protein 1"/>
    <property type="match status" value="1"/>
</dbReference>
<dbReference type="Gene3D" id="1.25.40.20">
    <property type="entry name" value="Ankyrin repeat-containing domain"/>
    <property type="match status" value="1"/>
</dbReference>
<dbReference type="Gene3D" id="1.10.150.50">
    <property type="entry name" value="Transcription Factor, Ets-1"/>
    <property type="match status" value="1"/>
</dbReference>
<dbReference type="InterPro" id="IPR002110">
    <property type="entry name" value="Ankyrin_rpt"/>
</dbReference>
<dbReference type="InterPro" id="IPR036770">
    <property type="entry name" value="Ankyrin_rpt-contain_sf"/>
</dbReference>
<dbReference type="InterPro" id="IPR042650">
    <property type="entry name" value="Asz1_SAM"/>
</dbReference>
<dbReference type="InterPro" id="IPR001660">
    <property type="entry name" value="SAM"/>
</dbReference>
<dbReference type="InterPro" id="IPR013761">
    <property type="entry name" value="SAM/pointed_sf"/>
</dbReference>
<dbReference type="PANTHER" id="PTHR24157">
    <property type="entry name" value="ANKYRIN REPEAT, SAM AND BASIC LEUCINE ZIPPER DOMAIN-CONTAINING PROTEIN 1"/>
    <property type="match status" value="1"/>
</dbReference>
<dbReference type="PANTHER" id="PTHR24157:SF3">
    <property type="entry name" value="ANKYRIN REPEAT, SAM AND BASIC LEUCINE ZIPPER DOMAIN-CONTAINING PROTEIN 1"/>
    <property type="match status" value="1"/>
</dbReference>
<dbReference type="Pfam" id="PF00023">
    <property type="entry name" value="Ank"/>
    <property type="match status" value="1"/>
</dbReference>
<dbReference type="Pfam" id="PF12796">
    <property type="entry name" value="Ank_2"/>
    <property type="match status" value="1"/>
</dbReference>
<dbReference type="Pfam" id="PF07647">
    <property type="entry name" value="SAM_2"/>
    <property type="match status" value="1"/>
</dbReference>
<dbReference type="PRINTS" id="PR01415">
    <property type="entry name" value="ANKYRIN"/>
</dbReference>
<dbReference type="SMART" id="SM00248">
    <property type="entry name" value="ANK"/>
    <property type="match status" value="5"/>
</dbReference>
<dbReference type="SUPFAM" id="SSF48403">
    <property type="entry name" value="Ankyrin repeat"/>
    <property type="match status" value="1"/>
</dbReference>
<dbReference type="SUPFAM" id="SSF140860">
    <property type="entry name" value="Pseudo ankyrin repeat-like"/>
    <property type="match status" value="1"/>
</dbReference>
<dbReference type="SUPFAM" id="SSF47769">
    <property type="entry name" value="SAM/Pointed domain"/>
    <property type="match status" value="1"/>
</dbReference>
<dbReference type="PROSITE" id="PS50297">
    <property type="entry name" value="ANK_REP_REGION"/>
    <property type="match status" value="1"/>
</dbReference>
<dbReference type="PROSITE" id="PS50088">
    <property type="entry name" value="ANK_REPEAT"/>
    <property type="match status" value="3"/>
</dbReference>
<protein>
    <recommendedName>
        <fullName>Ankyrin repeat, SAM and basic leucine zipper domain-containing protein 1</fullName>
    </recommendedName>
    <alternativeName>
        <fullName>Ankyrin-like protein 1</fullName>
    </alternativeName>
    <alternativeName>
        <fullName>Germ cell-specific ankyrin, SAM and basic leucine zipper domain-containing protein</fullName>
    </alternativeName>
</protein>
<name>ASZ1_HUMAN</name>
<proteinExistence type="evidence at protein level"/>
<keyword id="KW-0025">Alternative splicing</keyword>
<keyword id="KW-0040">ANK repeat</keyword>
<keyword id="KW-0963">Cytoplasm</keyword>
<keyword id="KW-0217">Developmental protein</keyword>
<keyword id="KW-0221">Differentiation</keyword>
<keyword id="KW-0469">Meiosis</keyword>
<keyword id="KW-0597">Phosphoprotein</keyword>
<keyword id="KW-1267">Proteomics identification</keyword>
<keyword id="KW-1185">Reference proteome</keyword>
<keyword id="KW-0677">Repeat</keyword>
<keyword id="KW-0943">RNA-mediated gene silencing</keyword>
<keyword id="KW-0744">Spermatogenesis</keyword>
<accession>Q8WWH4</accession>
<accession>A0AV27</accession>
<accession>A4D0V0</accession>
<accession>B7ZM20</accession>